<feature type="chain" id="PRO_0000460206" description="Zn(2)-C6 fungal-type transcription factor pigI">
    <location>
        <begin position="1"/>
        <end position="812"/>
    </location>
</feature>
<feature type="DNA-binding region" description="Zn(2)-C6 fungal-type" evidence="1">
    <location>
        <begin position="77"/>
        <end position="105"/>
    </location>
</feature>
<feature type="region of interest" description="Disordered" evidence="2">
    <location>
        <begin position="42"/>
        <end position="74"/>
    </location>
</feature>
<name>PIGI_MONRU</name>
<evidence type="ECO:0000255" key="1">
    <source>
        <dbReference type="PROSITE-ProRule" id="PRU00227"/>
    </source>
</evidence>
<evidence type="ECO:0000256" key="2">
    <source>
        <dbReference type="SAM" id="MobiDB-lite"/>
    </source>
</evidence>
<evidence type="ECO:0000269" key="3">
    <source>
    </source>
</evidence>
<evidence type="ECO:0000269" key="4">
    <source>
    </source>
</evidence>
<evidence type="ECO:0000269" key="5">
    <source>
    </source>
</evidence>
<evidence type="ECO:0000269" key="6">
    <source>
    </source>
</evidence>
<evidence type="ECO:0000269" key="7">
    <source>
    </source>
</evidence>
<evidence type="ECO:0000269" key="8">
    <source>
    </source>
</evidence>
<evidence type="ECO:0000269" key="9">
    <source>
    </source>
</evidence>
<evidence type="ECO:0000269" key="10">
    <source>
    </source>
</evidence>
<evidence type="ECO:0000269" key="11">
    <source>
    </source>
</evidence>
<evidence type="ECO:0000269" key="12">
    <source>
    </source>
</evidence>
<evidence type="ECO:0000303" key="13">
    <source>
    </source>
</evidence>
<dbReference type="EMBL" id="KX278309">
    <property type="protein sequence ID" value="APZ73944.1"/>
    <property type="molecule type" value="mRNA"/>
</dbReference>
<dbReference type="GO" id="GO:0005634">
    <property type="term" value="C:nucleus"/>
    <property type="evidence" value="ECO:0007669"/>
    <property type="project" value="UniProtKB-SubCell"/>
</dbReference>
<dbReference type="GO" id="GO:0003677">
    <property type="term" value="F:DNA binding"/>
    <property type="evidence" value="ECO:0007669"/>
    <property type="project" value="UniProtKB-KW"/>
</dbReference>
<dbReference type="GO" id="GO:0000981">
    <property type="term" value="F:DNA-binding transcription factor activity, RNA polymerase II-specific"/>
    <property type="evidence" value="ECO:0007669"/>
    <property type="project" value="InterPro"/>
</dbReference>
<dbReference type="GO" id="GO:0031409">
    <property type="term" value="F:pigment binding"/>
    <property type="evidence" value="ECO:0007669"/>
    <property type="project" value="UniProtKB-KW"/>
</dbReference>
<dbReference type="GO" id="GO:0008270">
    <property type="term" value="F:zinc ion binding"/>
    <property type="evidence" value="ECO:0007669"/>
    <property type="project" value="InterPro"/>
</dbReference>
<dbReference type="GO" id="GO:0006351">
    <property type="term" value="P:DNA-templated transcription"/>
    <property type="evidence" value="ECO:0007669"/>
    <property type="project" value="InterPro"/>
</dbReference>
<dbReference type="CDD" id="cd12148">
    <property type="entry name" value="fungal_TF_MHR"/>
    <property type="match status" value="1"/>
</dbReference>
<dbReference type="Gene3D" id="4.10.240.10">
    <property type="entry name" value="Zn(2)-C6 fungal-type DNA-binding domain"/>
    <property type="match status" value="1"/>
</dbReference>
<dbReference type="InterPro" id="IPR050613">
    <property type="entry name" value="Sec_Metabolite_Reg"/>
</dbReference>
<dbReference type="InterPro" id="IPR007219">
    <property type="entry name" value="Transcription_factor_dom_fun"/>
</dbReference>
<dbReference type="InterPro" id="IPR036864">
    <property type="entry name" value="Zn2-C6_fun-type_DNA-bd_sf"/>
</dbReference>
<dbReference type="InterPro" id="IPR001138">
    <property type="entry name" value="Zn2Cys6_DnaBD"/>
</dbReference>
<dbReference type="PANTHER" id="PTHR31001">
    <property type="entry name" value="UNCHARACTERIZED TRANSCRIPTIONAL REGULATORY PROTEIN"/>
    <property type="match status" value="1"/>
</dbReference>
<dbReference type="PANTHER" id="PTHR31001:SF74">
    <property type="entry name" value="ZN(II)2CYS6 TRANSCRIPTION FACTOR (EUROFUNG)"/>
    <property type="match status" value="1"/>
</dbReference>
<dbReference type="Pfam" id="PF04082">
    <property type="entry name" value="Fungal_trans"/>
    <property type="match status" value="1"/>
</dbReference>
<dbReference type="Pfam" id="PF00172">
    <property type="entry name" value="Zn_clus"/>
    <property type="match status" value="1"/>
</dbReference>
<dbReference type="SMART" id="SM00906">
    <property type="entry name" value="Fungal_trans"/>
    <property type="match status" value="1"/>
</dbReference>
<dbReference type="SMART" id="SM00066">
    <property type="entry name" value="GAL4"/>
    <property type="match status" value="1"/>
</dbReference>
<dbReference type="SUPFAM" id="SSF57701">
    <property type="entry name" value="Zn2/Cys6 DNA-binding domain"/>
    <property type="match status" value="1"/>
</dbReference>
<dbReference type="PROSITE" id="PS00463">
    <property type="entry name" value="ZN2_CY6_FUNGAL_1"/>
    <property type="match status" value="1"/>
</dbReference>
<dbReference type="PROSITE" id="PS50048">
    <property type="entry name" value="ZN2_CY6_FUNGAL_2"/>
    <property type="match status" value="1"/>
</dbReference>
<organism>
    <name type="scientific">Monascus ruber</name>
    <name type="common">Mold</name>
    <dbReference type="NCBI Taxonomy" id="89489"/>
    <lineage>
        <taxon>Eukaryota</taxon>
        <taxon>Fungi</taxon>
        <taxon>Dikarya</taxon>
        <taxon>Ascomycota</taxon>
        <taxon>Pezizomycotina</taxon>
        <taxon>Eurotiomycetes</taxon>
        <taxon>Eurotiomycetidae</taxon>
        <taxon>Eurotiales</taxon>
        <taxon>Aspergillaceae</taxon>
        <taxon>Monascus</taxon>
    </lineage>
</organism>
<proteinExistence type="evidence at protein level"/>
<reference key="1">
    <citation type="submission" date="2016-05" db="EMBL/GenBank/DDBJ databases">
        <title>The biosynthetic steps of Monascus azahpilone pigments in fungi.</title>
        <authorList>
            <person name="Chen W."/>
            <person name="Chen F."/>
        </authorList>
    </citation>
    <scope>NUCLEOTIDE SEQUENCE [MRNA]</scope>
    <source>
        <strain>M7</strain>
    </source>
</reference>
<reference key="2">
    <citation type="journal article" date="1977" name="Plant Physiol.">
        <title>Pigmentation and antibacterial activity of fast neutron- and X-ray-induced strains of Monascus purpureus went.</title>
        <authorList>
            <person name="Wong H.C."/>
            <person name="Bau Y.S."/>
        </authorList>
    </citation>
    <scope>BIOTECHNOLOGY</scope>
</reference>
<reference key="3">
    <citation type="journal article" date="2005" name="Chem. Biodivers.">
        <title>Anti-tumor-initiating effects of monascin, an azaphilonoid pigment from the extract of Monascus pilosus fermented rice (red-mold rice).</title>
        <authorList>
            <person name="Akihisa T."/>
            <person name="Tokuda H."/>
            <person name="Ukiya M."/>
            <person name="Kiyota A."/>
            <person name="Yasukawa K."/>
            <person name="Sakamoto N."/>
            <person name="Kimura Y."/>
            <person name="Suzuki T."/>
            <person name="Takayasu J."/>
            <person name="Nishino H."/>
        </authorList>
    </citation>
    <scope>BIOTECHNOLOGY</scope>
</reference>
<reference key="4">
    <citation type="journal article" date="2006" name="Appl. Microbiol. Biotechnol.">
        <title>In vivo hypolipidemic effects and safety of low dosage Monascus powder in a hamster model of hyperlipidemia.</title>
        <authorList>
            <person name="Lee C.L."/>
            <person name="Tsai T.Y."/>
            <person name="Wang J.J."/>
            <person name="Pan T.M."/>
        </authorList>
    </citation>
    <scope>BIOTECHNOLOGY</scope>
</reference>
<reference key="5">
    <citation type="journal article" date="2010" name="J. Agric. Food Chem.">
        <title>Monascin and ankaflavin act as novel hypolipidemic and high-density lipoprotein cholesterol-raising agents in red mold dioscorea.</title>
        <authorList>
            <person name="Lee C.L."/>
            <person name="Kung Y.H."/>
            <person name="Wu C.L."/>
            <person name="Hsu Y.W."/>
            <person name="Pan T.M."/>
        </authorList>
    </citation>
    <scope>BIOTECHNOLOGY</scope>
</reference>
<reference key="6">
    <citation type="journal article" date="2012" name="Appl. Microbiol. Biotechnol.">
        <title>Development of Monascus fermentation technology for high hypolipidemic effect.</title>
        <authorList>
            <person name="Lee C.L."/>
            <person name="Pan T.M."/>
        </authorList>
    </citation>
    <scope>BIOTECHNOLOGY</scope>
</reference>
<reference key="7">
    <citation type="journal article" date="2016" name="Appl. Microbiol. Biotechnol.">
        <title>Identification and role analysis of an intermediate produced by a polygenic mutant of Monascus pigments cluster in Monascus ruber M7.</title>
        <authorList>
            <person name="Liu J."/>
            <person name="Zhou Y."/>
            <person name="Yi T."/>
            <person name="Zhao M."/>
            <person name="Xie N."/>
            <person name="Lei M."/>
            <person name="Liu Q."/>
            <person name="Shao Y."/>
            <person name="Chen F."/>
        </authorList>
    </citation>
    <scope>FUNCTION</scope>
</reference>
<reference key="8">
    <citation type="journal article" date="2017" name="Chem. Sci.">
        <title>Orange, red, yellow: biosynthesis of azaphilone pigments in Monascus fungi.</title>
        <authorList>
            <person name="Chen W."/>
            <person name="Chen R."/>
            <person name="Liu Q."/>
            <person name="He Y."/>
            <person name="He K."/>
            <person name="Ding X."/>
            <person name="Kang L."/>
            <person name="Guo X."/>
            <person name="Xie N."/>
            <person name="Zhou Y."/>
            <person name="Lu Y."/>
            <person name="Cox R.J."/>
            <person name="Molnar I."/>
            <person name="Li M."/>
            <person name="Shao Y."/>
            <person name="Chen F."/>
        </authorList>
    </citation>
    <scope>FUNCTION</scope>
</reference>
<reference key="9">
    <citation type="journal article" date="2021" name="Front. Microbiol.">
        <title>An integrated approach to determine the boundaries of the azaphilone pigment biosynthetic gene cluster of Monascus ruber M7 gown on potato dextrose agar.</title>
        <authorList>
            <person name="Liu Q."/>
            <person name="Zhong S."/>
            <person name="Wang X."/>
            <person name="Gao S."/>
            <person name="Yang X."/>
            <person name="Chen F."/>
            <person name="Molnar I."/>
        </authorList>
    </citation>
    <scope>FUNCTION</scope>
</reference>
<reference key="10">
    <citation type="journal article" date="2022" name="Appl. Biochem. Biotechnol.">
        <title>Inactivation of MrSir2 in Monascus ruber Influenced the Developmental Process and the Production of Monascus Azaphilone Pigments.</title>
        <authorList>
            <person name="Zhang J."/>
            <person name="Yang Y."/>
            <person name="Mao Z."/>
            <person name="Yan Q."/>
            <person name="Chen Q."/>
            <person name="Yi M."/>
            <person name="Shao Y."/>
        </authorList>
    </citation>
    <scope>INDUCTION</scope>
    <scope>FUNCTION</scope>
</reference>
<reference key="11">
    <citation type="journal article" date="2023" name="Food Res. Intern.">
        <title>Improved natural food colorant production in the filamentous fungus Monascus ruber using CRISPR-based engineering.</title>
        <authorList>
            <person name="Ree Yoon H."/>
            <person name="Han S."/>
            <person name="Chul Shin S."/>
            <person name="Cheong Yeom S."/>
            <person name="Jin Kim H."/>
        </authorList>
    </citation>
    <scope>BIOTECHNOLOGY</scope>
</reference>
<protein>
    <recommendedName>
        <fullName evidence="13">Zn(2)-C6 fungal-type transcription factor pigI</fullName>
    </recommendedName>
    <alternativeName>
        <fullName evidence="13">Azaphilone pigments biosynthesis cluster protein I</fullName>
    </alternativeName>
</protein>
<gene>
    <name evidence="13" type="primary">pigI</name>
</gene>
<keyword id="KW-0238">DNA-binding</keyword>
<keyword id="KW-0479">Metal-binding</keyword>
<keyword id="KW-0539">Nucleus</keyword>
<keyword id="KW-0608">Pigment</keyword>
<keyword id="KW-0804">Transcription</keyword>
<keyword id="KW-0805">Transcription regulation</keyword>
<sequence length="812" mass="90357">MQPRRESGGLIARFAPDIRLKSAVACLFNRASLVLARRVGDGCLHPRSPPRDRTAMADNSNSSPPASRRREKPQLSCTLCRRRKLRCDRRQPCETCVRRGLSLSCTYVRPPGAAPERIDRAQGRPAGVENLPERIGQLERLITTLMDTVQAGKTPSAREPMPADSTAAGFERAAAAAAAAAAAAAAPGEAVDAADSAAKEEEEEAAPQLSDRFGRIKIEKMETAYVESTHWTAILDGIAELRDHFRDEQNAVGSAPFPGPGAAAEPAEPDEPDILFGNYRCVSKDEILSAMLPRPLVDRLVTEYFINKDIAPVIVHSVTFLREYERFWEHPRETPIMWIGLLFGVMCLGAAFQRQRSSQMPDPQQLVRLYREKIIQCLVVGKYAKCAPYTLETLLLYLNIEYLQSEDTRVETWILLGVIVRLALRMGYHRDASHFPHISPFAAEMRRRVWALIVQFDCLTSAQVGLPRMIRDSQSDTAEPRNLLDEDFDENSTALPLPQPSTVQTPVQYIVAKNRIVAVFGRICDLITSSNAPSYPEVMQLDETLHDTYRSVPGGLQMRPMTRSLTDGATVILRRMYIVLLYHKAVCMLHHRYMIPARTDGRYAYSRSTCVAAALQILSHQWTLHNETQPGGRLYEERWKVSSLVKSTFFLGTTILCAELDCSLHKEPADAEQSPAETGLRQQVIQALHNSYTVWLQASDSSREARLAADVSGLLLTRAQRKWRPAEMRQVGNMAMSSESPFMGVSIPPQSATMASAAPVEQPLSMPQLLQFNTAAHIDYSDLGAEPLGLSQGVDDMLAMSMTFPRMFNVPV</sequence>
<comment type="function">
    <text evidence="8 9 10 11">Zn(2)-C6 fungal-type transcription factor; part of the gene cluster that mediates the biosynthesis of azaphilone pigments (MonAzPs), a complex mixture of compounds with a common azaphilone skeleton very widely used as food colorants (PubMed:26946170, PubMed:28959415, PubMed:34220766). Acts probably as a negative regulator of the azaphilone pigments (MonAzPs) gene cluster (PubMed:35802237).</text>
</comment>
<comment type="subcellular location">
    <subcellularLocation>
        <location evidence="1">Nucleus</location>
    </subcellularLocation>
</comment>
<comment type="induction">
    <text evidence="11">Expression is negatively regulated by the transcription factor sir2.</text>
</comment>
<comment type="biotechnology">
    <text evidence="3 4 5 6 7 12">As colorants, MonAzPs are widely used in various food products for centuries (PubMed:37087240). Moreover, MonAzPs also possess wide-ranging biological activities such as antibacterial activity, preventing hypertension, lowering cholesterol levels, causing hypolipidemic effects, and displaying antiobesity and antitumor activities (PubMed:16283302, PubMed:16660141, PubMed:17191930, PubMed:20666456, PubMed:22562164).</text>
</comment>
<accession>A0A1P8VFQ8</accession>